<feature type="chain" id="PRO_0000255618" description="F-actin-capping protein subunit alpha">
    <location>
        <begin position="1"/>
        <end position="273"/>
    </location>
</feature>
<sequence length="273" mass="30039">MASTVEFASSFIEGAPPGELADVVSDIKTLTSDGDDIIPSLAPAFERYNESQLATVKLPGASQEVIVSEFNRLEGSRYFDVESQTSFEVDHITQSTSAAQSYVLESQNADLIKSLLKTLGAHAREHYPSSSYGVYPIEKDSAIAILLVANRYSPNNFWNGRYRSIYQFPVGDSTTITGKIHVDVHYYEDGNVALNTTKPLNISVPNASAESIISRIASAERNYQEELNKAFGQMAEGAFKSLRRQLPITRQKVEWEKVGGYRLGQDISGGKGR</sequence>
<dbReference type="EMBL" id="AACD01000032">
    <property type="protein sequence ID" value="EAA64958.1"/>
    <property type="status" value="ALT_SEQ"/>
    <property type="molecule type" value="Genomic_DNA"/>
</dbReference>
<dbReference type="EMBL" id="BN001307">
    <property type="protein sequence ID" value="CBF86232.1"/>
    <property type="status" value="ALT_SEQ"/>
    <property type="molecule type" value="Genomic_DNA"/>
</dbReference>
<dbReference type="RefSeq" id="XP_659730.1">
    <property type="nucleotide sequence ID" value="XM_654638.1"/>
</dbReference>
<dbReference type="SMR" id="Q5BBF4"/>
<dbReference type="FunCoup" id="Q5BBF4">
    <property type="interactions" value="789"/>
</dbReference>
<dbReference type="STRING" id="227321.Q5BBF4"/>
<dbReference type="eggNOG" id="KOG0836">
    <property type="taxonomic scope" value="Eukaryota"/>
</dbReference>
<dbReference type="HOGENOM" id="CLU_045161_3_0_1"/>
<dbReference type="InParanoid" id="Q5BBF4"/>
<dbReference type="Proteomes" id="UP000000560">
    <property type="component" value="Chromosome VII"/>
</dbReference>
<dbReference type="GO" id="GO:0030479">
    <property type="term" value="C:actin cortical patch"/>
    <property type="evidence" value="ECO:0000318"/>
    <property type="project" value="GO_Central"/>
</dbReference>
<dbReference type="GO" id="GO:0030863">
    <property type="term" value="C:cortical cytoskeleton"/>
    <property type="evidence" value="ECO:0000318"/>
    <property type="project" value="GO_Central"/>
</dbReference>
<dbReference type="GO" id="GO:0008290">
    <property type="term" value="C:F-actin capping protein complex"/>
    <property type="evidence" value="ECO:0000318"/>
    <property type="project" value="GO_Central"/>
</dbReference>
<dbReference type="GO" id="GO:0051015">
    <property type="term" value="F:actin filament binding"/>
    <property type="evidence" value="ECO:0000318"/>
    <property type="project" value="GO_Central"/>
</dbReference>
<dbReference type="GO" id="GO:0030036">
    <property type="term" value="P:actin cytoskeleton organization"/>
    <property type="evidence" value="ECO:0000318"/>
    <property type="project" value="GO_Central"/>
</dbReference>
<dbReference type="GO" id="GO:0051016">
    <property type="term" value="P:barbed-end actin filament capping"/>
    <property type="evidence" value="ECO:0000318"/>
    <property type="project" value="GO_Central"/>
</dbReference>
<dbReference type="FunFam" id="3.30.1140.60:FF:000004">
    <property type="entry name" value="F-actin-capping protein subunit alpha"/>
    <property type="match status" value="1"/>
</dbReference>
<dbReference type="FunFam" id="3.90.1150.210:FF:000003">
    <property type="entry name" value="F-actin-capping protein subunit alpha"/>
    <property type="match status" value="1"/>
</dbReference>
<dbReference type="Gene3D" id="3.30.1140.60">
    <property type="entry name" value="F-actin capping protein, alpha subunit"/>
    <property type="match status" value="1"/>
</dbReference>
<dbReference type="Gene3D" id="3.90.1150.210">
    <property type="entry name" value="F-actin capping protein, beta subunit"/>
    <property type="match status" value="1"/>
</dbReference>
<dbReference type="InterPro" id="IPR002189">
    <property type="entry name" value="CapZ_alpha"/>
</dbReference>
<dbReference type="InterPro" id="IPR037282">
    <property type="entry name" value="CapZ_alpha/beta"/>
</dbReference>
<dbReference type="InterPro" id="IPR042276">
    <property type="entry name" value="CapZ_alpha/beta_2"/>
</dbReference>
<dbReference type="InterPro" id="IPR042489">
    <property type="entry name" value="CapZ_alpha_1"/>
</dbReference>
<dbReference type="InterPro" id="IPR017865">
    <property type="entry name" value="F-actin_cap_asu_CS"/>
</dbReference>
<dbReference type="PANTHER" id="PTHR10653">
    <property type="entry name" value="F-ACTIN-CAPPING PROTEIN SUBUNIT ALPHA"/>
    <property type="match status" value="1"/>
</dbReference>
<dbReference type="PANTHER" id="PTHR10653:SF0">
    <property type="entry name" value="F-ACTIN-CAPPING PROTEIN SUBUNIT ALPHA"/>
    <property type="match status" value="1"/>
</dbReference>
<dbReference type="Pfam" id="PF01267">
    <property type="entry name" value="F-actin_cap_A"/>
    <property type="match status" value="1"/>
</dbReference>
<dbReference type="PRINTS" id="PR00191">
    <property type="entry name" value="FACTINCAPA"/>
</dbReference>
<dbReference type="SUPFAM" id="SSF90096">
    <property type="entry name" value="Subunits of heterodimeric actin filament capping protein Capz"/>
    <property type="match status" value="1"/>
</dbReference>
<dbReference type="PROSITE" id="PS00748">
    <property type="entry name" value="F_ACTIN_CAPPING_A_1"/>
    <property type="match status" value="1"/>
</dbReference>
<dbReference type="PROSITE" id="PS00749">
    <property type="entry name" value="F_ACTIN_CAPPING_A_2"/>
    <property type="match status" value="1"/>
</dbReference>
<gene>
    <name type="primary">cap1</name>
    <name type="ORF">AN2126</name>
</gene>
<accession>Q5BBF4</accession>
<accession>C8VM11</accession>
<organism>
    <name type="scientific">Emericella nidulans (strain FGSC A4 / ATCC 38163 / CBS 112.46 / NRRL 194 / M139)</name>
    <name type="common">Aspergillus nidulans</name>
    <dbReference type="NCBI Taxonomy" id="227321"/>
    <lineage>
        <taxon>Eukaryota</taxon>
        <taxon>Fungi</taxon>
        <taxon>Dikarya</taxon>
        <taxon>Ascomycota</taxon>
        <taxon>Pezizomycotina</taxon>
        <taxon>Eurotiomycetes</taxon>
        <taxon>Eurotiomycetidae</taxon>
        <taxon>Eurotiales</taxon>
        <taxon>Aspergillaceae</taxon>
        <taxon>Aspergillus</taxon>
        <taxon>Aspergillus subgen. Nidulantes</taxon>
    </lineage>
</organism>
<proteinExistence type="inferred from homology"/>
<name>CAPZA_EMENI</name>
<keyword id="KW-0117">Actin capping</keyword>
<keyword id="KW-0009">Actin-binding</keyword>
<keyword id="KW-0963">Cytoplasm</keyword>
<keyword id="KW-0206">Cytoskeleton</keyword>
<keyword id="KW-1185">Reference proteome</keyword>
<reference key="1">
    <citation type="journal article" date="2005" name="Nature">
        <title>Sequencing of Aspergillus nidulans and comparative analysis with A. fumigatus and A. oryzae.</title>
        <authorList>
            <person name="Galagan J.E."/>
            <person name="Calvo S.E."/>
            <person name="Cuomo C."/>
            <person name="Ma L.-J."/>
            <person name="Wortman J.R."/>
            <person name="Batzoglou S."/>
            <person name="Lee S.-I."/>
            <person name="Bastuerkmen M."/>
            <person name="Spevak C.C."/>
            <person name="Clutterbuck J."/>
            <person name="Kapitonov V."/>
            <person name="Jurka J."/>
            <person name="Scazzocchio C."/>
            <person name="Farman M.L."/>
            <person name="Butler J."/>
            <person name="Purcell S."/>
            <person name="Harris S."/>
            <person name="Braus G.H."/>
            <person name="Draht O."/>
            <person name="Busch S."/>
            <person name="D'Enfert C."/>
            <person name="Bouchier C."/>
            <person name="Goldman G.H."/>
            <person name="Bell-Pedersen D."/>
            <person name="Griffiths-Jones S."/>
            <person name="Doonan J.H."/>
            <person name="Yu J."/>
            <person name="Vienken K."/>
            <person name="Pain A."/>
            <person name="Freitag M."/>
            <person name="Selker E.U."/>
            <person name="Archer D.B."/>
            <person name="Penalva M.A."/>
            <person name="Oakley B.R."/>
            <person name="Momany M."/>
            <person name="Tanaka T."/>
            <person name="Kumagai T."/>
            <person name="Asai K."/>
            <person name="Machida M."/>
            <person name="Nierman W.C."/>
            <person name="Denning D.W."/>
            <person name="Caddick M.X."/>
            <person name="Hynes M."/>
            <person name="Paoletti M."/>
            <person name="Fischer R."/>
            <person name="Miller B.L."/>
            <person name="Dyer P.S."/>
            <person name="Sachs M.S."/>
            <person name="Osmani S.A."/>
            <person name="Birren B.W."/>
        </authorList>
    </citation>
    <scope>NUCLEOTIDE SEQUENCE [LARGE SCALE GENOMIC DNA]</scope>
    <source>
        <strain>FGSC A4 / ATCC 38163 / CBS 112.46 / NRRL 194 / M139</strain>
    </source>
</reference>
<reference key="2">
    <citation type="journal article" date="2009" name="Fungal Genet. Biol.">
        <title>The 2008 update of the Aspergillus nidulans genome annotation: a community effort.</title>
        <authorList>
            <person name="Wortman J.R."/>
            <person name="Gilsenan J.M."/>
            <person name="Joardar V."/>
            <person name="Deegan J."/>
            <person name="Clutterbuck J."/>
            <person name="Andersen M.R."/>
            <person name="Archer D."/>
            <person name="Bencina M."/>
            <person name="Braus G."/>
            <person name="Coutinho P."/>
            <person name="von Dohren H."/>
            <person name="Doonan J."/>
            <person name="Driessen A.J."/>
            <person name="Durek P."/>
            <person name="Espeso E."/>
            <person name="Fekete E."/>
            <person name="Flipphi M."/>
            <person name="Estrada C.G."/>
            <person name="Geysens S."/>
            <person name="Goldman G."/>
            <person name="de Groot P.W."/>
            <person name="Hansen K."/>
            <person name="Harris S.D."/>
            <person name="Heinekamp T."/>
            <person name="Helmstaedt K."/>
            <person name="Henrissat B."/>
            <person name="Hofmann G."/>
            <person name="Homan T."/>
            <person name="Horio T."/>
            <person name="Horiuchi H."/>
            <person name="James S."/>
            <person name="Jones M."/>
            <person name="Karaffa L."/>
            <person name="Karanyi Z."/>
            <person name="Kato M."/>
            <person name="Keller N."/>
            <person name="Kelly D.E."/>
            <person name="Kiel J.A."/>
            <person name="Kim J.M."/>
            <person name="van der Klei I.J."/>
            <person name="Klis F.M."/>
            <person name="Kovalchuk A."/>
            <person name="Krasevec N."/>
            <person name="Kubicek C.P."/>
            <person name="Liu B."/>
            <person name="Maccabe A."/>
            <person name="Meyer V."/>
            <person name="Mirabito P."/>
            <person name="Miskei M."/>
            <person name="Mos M."/>
            <person name="Mullins J."/>
            <person name="Nelson D.R."/>
            <person name="Nielsen J."/>
            <person name="Oakley B.R."/>
            <person name="Osmani S.A."/>
            <person name="Pakula T."/>
            <person name="Paszewski A."/>
            <person name="Paulsen I."/>
            <person name="Pilsyk S."/>
            <person name="Pocsi I."/>
            <person name="Punt P.J."/>
            <person name="Ram A.F."/>
            <person name="Ren Q."/>
            <person name="Robellet X."/>
            <person name="Robson G."/>
            <person name="Seiboth B."/>
            <person name="van Solingen P."/>
            <person name="Specht T."/>
            <person name="Sun J."/>
            <person name="Taheri-Talesh N."/>
            <person name="Takeshita N."/>
            <person name="Ussery D."/>
            <person name="vanKuyk P.A."/>
            <person name="Visser H."/>
            <person name="van de Vondervoort P.J."/>
            <person name="de Vries R.P."/>
            <person name="Walton J."/>
            <person name="Xiang X."/>
            <person name="Xiong Y."/>
            <person name="Zeng A.P."/>
            <person name="Brandt B.W."/>
            <person name="Cornell M.J."/>
            <person name="van den Hondel C.A."/>
            <person name="Visser J."/>
            <person name="Oliver S.G."/>
            <person name="Turner G."/>
        </authorList>
    </citation>
    <scope>GENOME REANNOTATION</scope>
    <source>
        <strain>FGSC A4 / ATCC 38163 / CBS 112.46 / NRRL 194 / M139</strain>
    </source>
</reference>
<evidence type="ECO:0000250" key="1"/>
<evidence type="ECO:0000305" key="2"/>
<protein>
    <recommendedName>
        <fullName>F-actin-capping protein subunit alpha</fullName>
    </recommendedName>
</protein>
<comment type="function">
    <text evidence="1">F-actin-capping proteins bind in a Ca(2+)-independent manner to the fast growing ends of actin filaments (barbed end) thereby blocking the exchange of subunits at these ends. Unlike other capping proteins (such as gelsolin and severin), these proteins do not sever actin filaments (By similarity).</text>
</comment>
<comment type="subunit">
    <text evidence="1">Heterodimer of an alpha and a beta subunit.</text>
</comment>
<comment type="subcellular location">
    <subcellularLocation>
        <location evidence="1">Cytoplasm</location>
        <location evidence="1">Cytoskeleton</location>
    </subcellularLocation>
    <text evidence="1">Septum.</text>
</comment>
<comment type="similarity">
    <text evidence="2">Belongs to the F-actin-capping protein alpha subunit family.</text>
</comment>
<comment type="sequence caution" evidence="2">
    <conflict type="erroneous gene model prediction">
        <sequence resource="EMBL-CDS" id="CBF86232"/>
    </conflict>
</comment>
<comment type="sequence caution" evidence="2">
    <conflict type="erroneous gene model prediction">
        <sequence resource="EMBL-CDS" id="EAA64958"/>
    </conflict>
</comment>